<sequence length="37" mass="4352">MKVRASVKRVCRNCKIVKRRGTVRVICTEARHKQRQG</sequence>
<dbReference type="EMBL" id="CP000544">
    <property type="protein sequence ID" value="ABM61613.1"/>
    <property type="molecule type" value="Genomic_DNA"/>
</dbReference>
<dbReference type="RefSeq" id="WP_011813636.1">
    <property type="nucleotide sequence ID" value="NC_008789.1"/>
</dbReference>
<dbReference type="SMR" id="A1WVA1"/>
<dbReference type="STRING" id="349124.Hhal_0837"/>
<dbReference type="KEGG" id="hha:Hhal_0837"/>
<dbReference type="eggNOG" id="COG0257">
    <property type="taxonomic scope" value="Bacteria"/>
</dbReference>
<dbReference type="HOGENOM" id="CLU_135723_6_2_6"/>
<dbReference type="OrthoDB" id="9802520at2"/>
<dbReference type="Proteomes" id="UP000000647">
    <property type="component" value="Chromosome"/>
</dbReference>
<dbReference type="GO" id="GO:0005737">
    <property type="term" value="C:cytoplasm"/>
    <property type="evidence" value="ECO:0007669"/>
    <property type="project" value="UniProtKB-ARBA"/>
</dbReference>
<dbReference type="GO" id="GO:1990904">
    <property type="term" value="C:ribonucleoprotein complex"/>
    <property type="evidence" value="ECO:0007669"/>
    <property type="project" value="UniProtKB-KW"/>
</dbReference>
<dbReference type="GO" id="GO:0005840">
    <property type="term" value="C:ribosome"/>
    <property type="evidence" value="ECO:0007669"/>
    <property type="project" value="UniProtKB-KW"/>
</dbReference>
<dbReference type="GO" id="GO:0003735">
    <property type="term" value="F:structural constituent of ribosome"/>
    <property type="evidence" value="ECO:0007669"/>
    <property type="project" value="InterPro"/>
</dbReference>
<dbReference type="GO" id="GO:0006412">
    <property type="term" value="P:translation"/>
    <property type="evidence" value="ECO:0007669"/>
    <property type="project" value="UniProtKB-UniRule"/>
</dbReference>
<dbReference type="HAMAP" id="MF_00251">
    <property type="entry name" value="Ribosomal_bL36"/>
    <property type="match status" value="1"/>
</dbReference>
<dbReference type="InterPro" id="IPR000473">
    <property type="entry name" value="Ribosomal_bL36"/>
</dbReference>
<dbReference type="InterPro" id="IPR035977">
    <property type="entry name" value="Ribosomal_bL36_sp"/>
</dbReference>
<dbReference type="NCBIfam" id="TIGR01022">
    <property type="entry name" value="rpmJ_bact"/>
    <property type="match status" value="1"/>
</dbReference>
<dbReference type="PANTHER" id="PTHR42888">
    <property type="entry name" value="50S RIBOSOMAL PROTEIN L36, CHLOROPLASTIC"/>
    <property type="match status" value="1"/>
</dbReference>
<dbReference type="PANTHER" id="PTHR42888:SF1">
    <property type="entry name" value="LARGE RIBOSOMAL SUBUNIT PROTEIN BL36C"/>
    <property type="match status" value="1"/>
</dbReference>
<dbReference type="Pfam" id="PF00444">
    <property type="entry name" value="Ribosomal_L36"/>
    <property type="match status" value="1"/>
</dbReference>
<dbReference type="SUPFAM" id="SSF57840">
    <property type="entry name" value="Ribosomal protein L36"/>
    <property type="match status" value="1"/>
</dbReference>
<dbReference type="PROSITE" id="PS00828">
    <property type="entry name" value="RIBOSOMAL_L36"/>
    <property type="match status" value="1"/>
</dbReference>
<evidence type="ECO:0000255" key="1">
    <source>
        <dbReference type="HAMAP-Rule" id="MF_00251"/>
    </source>
</evidence>
<evidence type="ECO:0000305" key="2"/>
<name>RL36_HALHL</name>
<accession>A1WVA1</accession>
<feature type="chain" id="PRO_0000302215" description="Large ribosomal subunit protein bL36">
    <location>
        <begin position="1"/>
        <end position="37"/>
    </location>
</feature>
<reference key="1">
    <citation type="submission" date="2006-12" db="EMBL/GenBank/DDBJ databases">
        <title>Complete sequence of Halorhodospira halophila SL1.</title>
        <authorList>
            <consortium name="US DOE Joint Genome Institute"/>
            <person name="Copeland A."/>
            <person name="Lucas S."/>
            <person name="Lapidus A."/>
            <person name="Barry K."/>
            <person name="Detter J.C."/>
            <person name="Glavina del Rio T."/>
            <person name="Hammon N."/>
            <person name="Israni S."/>
            <person name="Dalin E."/>
            <person name="Tice H."/>
            <person name="Pitluck S."/>
            <person name="Saunders E."/>
            <person name="Brettin T."/>
            <person name="Bruce D."/>
            <person name="Han C."/>
            <person name="Tapia R."/>
            <person name="Schmutz J."/>
            <person name="Larimer F."/>
            <person name="Land M."/>
            <person name="Hauser L."/>
            <person name="Kyrpides N."/>
            <person name="Mikhailova N."/>
            <person name="Hoff W."/>
            <person name="Richardson P."/>
        </authorList>
    </citation>
    <scope>NUCLEOTIDE SEQUENCE [LARGE SCALE GENOMIC DNA]</scope>
    <source>
        <strain>DSM 244 / SL1</strain>
    </source>
</reference>
<protein>
    <recommendedName>
        <fullName evidence="1">Large ribosomal subunit protein bL36</fullName>
    </recommendedName>
    <alternativeName>
        <fullName evidence="2">50S ribosomal protein L36</fullName>
    </alternativeName>
</protein>
<gene>
    <name evidence="1" type="primary">rpmJ</name>
    <name type="ordered locus">Hhal_0837</name>
</gene>
<keyword id="KW-1185">Reference proteome</keyword>
<keyword id="KW-0687">Ribonucleoprotein</keyword>
<keyword id="KW-0689">Ribosomal protein</keyword>
<comment type="similarity">
    <text evidence="1">Belongs to the bacterial ribosomal protein bL36 family.</text>
</comment>
<organism>
    <name type="scientific">Halorhodospira halophila (strain DSM 244 / SL1)</name>
    <name type="common">Ectothiorhodospira halophila (strain DSM 244 / SL1)</name>
    <dbReference type="NCBI Taxonomy" id="349124"/>
    <lineage>
        <taxon>Bacteria</taxon>
        <taxon>Pseudomonadati</taxon>
        <taxon>Pseudomonadota</taxon>
        <taxon>Gammaproteobacteria</taxon>
        <taxon>Chromatiales</taxon>
        <taxon>Ectothiorhodospiraceae</taxon>
        <taxon>Halorhodospira</taxon>
    </lineage>
</organism>
<proteinExistence type="inferred from homology"/>